<protein>
    <recommendedName>
        <fullName evidence="1">ATP synthase subunit b, chloroplastic</fullName>
    </recommendedName>
    <alternativeName>
        <fullName evidence="1">ATP synthase F(0) sector subunit b</fullName>
    </alternativeName>
    <alternativeName>
        <fullName evidence="1">ATPase subunit I</fullName>
    </alternativeName>
</protein>
<keyword id="KW-0066">ATP synthesis</keyword>
<keyword id="KW-0067">ATP-binding</keyword>
<keyword id="KW-0138">CF(0)</keyword>
<keyword id="KW-0150">Chloroplast</keyword>
<keyword id="KW-0375">Hydrogen ion transport</keyword>
<keyword id="KW-0406">Ion transport</keyword>
<keyword id="KW-0472">Membrane</keyword>
<keyword id="KW-0547">Nucleotide-binding</keyword>
<keyword id="KW-0934">Plastid</keyword>
<keyword id="KW-0793">Thylakoid</keyword>
<keyword id="KW-0812">Transmembrane</keyword>
<keyword id="KW-1133">Transmembrane helix</keyword>
<keyword id="KW-0813">Transport</keyword>
<organism>
    <name type="scientific">Pisum sativum</name>
    <name type="common">Garden pea</name>
    <name type="synonym">Lathyrus oleraceus</name>
    <dbReference type="NCBI Taxonomy" id="3888"/>
    <lineage>
        <taxon>Eukaryota</taxon>
        <taxon>Viridiplantae</taxon>
        <taxon>Streptophyta</taxon>
        <taxon>Embryophyta</taxon>
        <taxon>Tracheophyta</taxon>
        <taxon>Spermatophyta</taxon>
        <taxon>Magnoliopsida</taxon>
        <taxon>eudicotyledons</taxon>
        <taxon>Gunneridae</taxon>
        <taxon>Pentapetalae</taxon>
        <taxon>rosids</taxon>
        <taxon>fabids</taxon>
        <taxon>Fabales</taxon>
        <taxon>Fabaceae</taxon>
        <taxon>Papilionoideae</taxon>
        <taxon>50 kb inversion clade</taxon>
        <taxon>NPAAA clade</taxon>
        <taxon>Hologalegina</taxon>
        <taxon>IRL clade</taxon>
        <taxon>Fabeae</taxon>
        <taxon>Pisum</taxon>
    </lineage>
</organism>
<evidence type="ECO:0000255" key="1">
    <source>
        <dbReference type="HAMAP-Rule" id="MF_01398"/>
    </source>
</evidence>
<gene>
    <name evidence="1" type="primary">atpF</name>
</gene>
<sequence length="172" mass="19527">MQNITDGSFGFDTDILATNLINLSAVLGVLIFFGKGVLSDLLDNRKQRILRTIRNSEELRETAIEQLEKARARLRKVEMEADRFRVNGYAEIEREKLNLINSIYTSLEQFENDKNKTIHFEQQRAINQVQQSVLQQALQGALGTLNSCLNNELHLRTIGATIGMFGSMKAKK</sequence>
<dbReference type="EMBL" id="X05917">
    <property type="protein sequence ID" value="CAA29351.1"/>
    <property type="molecule type" value="Genomic_DNA"/>
</dbReference>
<dbReference type="PIR" id="S00587">
    <property type="entry name" value="PWPM1"/>
</dbReference>
<dbReference type="RefSeq" id="YP_003587562.1">
    <property type="nucleotide sequence ID" value="NC_014057.1"/>
</dbReference>
<dbReference type="SMR" id="P08214"/>
<dbReference type="GeneID" id="9073114"/>
<dbReference type="GO" id="GO:0009535">
    <property type="term" value="C:chloroplast thylakoid membrane"/>
    <property type="evidence" value="ECO:0007669"/>
    <property type="project" value="UniProtKB-SubCell"/>
</dbReference>
<dbReference type="GO" id="GO:0045259">
    <property type="term" value="C:proton-transporting ATP synthase complex"/>
    <property type="evidence" value="ECO:0007669"/>
    <property type="project" value="UniProtKB-KW"/>
</dbReference>
<dbReference type="GO" id="GO:0005524">
    <property type="term" value="F:ATP binding"/>
    <property type="evidence" value="ECO:0007669"/>
    <property type="project" value="UniProtKB-KW"/>
</dbReference>
<dbReference type="GO" id="GO:0046933">
    <property type="term" value="F:proton-transporting ATP synthase activity, rotational mechanism"/>
    <property type="evidence" value="ECO:0007669"/>
    <property type="project" value="UniProtKB-UniRule"/>
</dbReference>
<dbReference type="CDD" id="cd06503">
    <property type="entry name" value="ATP-synt_Fo_b"/>
    <property type="match status" value="1"/>
</dbReference>
<dbReference type="HAMAP" id="MF_01398">
    <property type="entry name" value="ATP_synth_b_bprime"/>
    <property type="match status" value="1"/>
</dbReference>
<dbReference type="InterPro" id="IPR002146">
    <property type="entry name" value="ATP_synth_b/b'su_bac/chlpt"/>
</dbReference>
<dbReference type="PANTHER" id="PTHR34264">
    <property type="entry name" value="ATP SYNTHASE SUBUNIT B, CHLOROPLASTIC"/>
    <property type="match status" value="1"/>
</dbReference>
<dbReference type="PANTHER" id="PTHR34264:SF3">
    <property type="entry name" value="ATP SYNTHASE SUBUNIT B, CHLOROPLASTIC"/>
    <property type="match status" value="1"/>
</dbReference>
<dbReference type="Pfam" id="PF00430">
    <property type="entry name" value="ATP-synt_B"/>
    <property type="match status" value="1"/>
</dbReference>
<proteinExistence type="inferred from homology"/>
<geneLocation type="chloroplast"/>
<feature type="chain" id="PRO_0000082420" description="ATP synthase subunit b, chloroplastic">
    <location>
        <begin position="1"/>
        <end position="172"/>
    </location>
</feature>
<feature type="transmembrane region" description="Helical" evidence="1">
    <location>
        <begin position="15"/>
        <end position="37"/>
    </location>
</feature>
<name>ATPF_PEA</name>
<comment type="function">
    <text evidence="1">F(1)F(0) ATP synthase produces ATP from ADP in the presence of a proton or sodium gradient. F-type ATPases consist of two structural domains, F(1) containing the extramembraneous catalytic core and F(0) containing the membrane proton channel, linked together by a central stalk and a peripheral stalk. During catalysis, ATP synthesis in the catalytic domain of F(1) is coupled via a rotary mechanism of the central stalk subunits to proton translocation.</text>
</comment>
<comment type="function">
    <text evidence="1">Component of the F(0) channel, it forms part of the peripheral stalk, linking F(1) to F(0).</text>
</comment>
<comment type="subunit">
    <text evidence="1">F-type ATPases have 2 components, F(1) - the catalytic core - and F(0) - the membrane proton channel. F(1) has five subunits: alpha(3), beta(3), gamma(1), delta(1), epsilon(1). F(0) has four main subunits: a(1), b(1), b'(1) and c(10-14). The alpha and beta chains form an alternating ring which encloses part of the gamma chain. F(1) is attached to F(0) by a central stalk formed by the gamma and epsilon chains, while a peripheral stalk is formed by the delta, b and b' chains.</text>
</comment>
<comment type="subcellular location">
    <subcellularLocation>
        <location evidence="1">Plastid</location>
        <location evidence="1">Chloroplast thylakoid membrane</location>
        <topology evidence="1">Single-pass membrane protein</topology>
    </subcellularLocation>
</comment>
<comment type="miscellaneous">
    <text>In plastids the F-type ATPase is also known as CF(1)CF(0).</text>
</comment>
<comment type="similarity">
    <text evidence="1">Belongs to the ATPase B chain family.</text>
</comment>
<reference key="1">
    <citation type="journal article" date="1987" name="J. Mol. Biol.">
        <title>A gene cluster in the spinach and pea chloroplast genomes encoding one CF1 and three CF0 subunits of the H+-ATP synthase complex and the ribosomal protein S2.</title>
        <authorList>
            <person name="Hudson G.S."/>
            <person name="Mason J.G."/>
            <person name="Holton T.A."/>
            <person name="Koller B."/>
            <person name="Cox G.B."/>
            <person name="Whitfeld P.R."/>
            <person name="Bottomley W."/>
        </authorList>
    </citation>
    <scope>NUCLEOTIDE SEQUENCE [GENOMIC DNA]</scope>
</reference>
<accession>P08214</accession>